<reference key="1">
    <citation type="journal article" date="2000" name="Nature">
        <title>Sequence and analysis of chromosome 1 of the plant Arabidopsis thaliana.</title>
        <authorList>
            <person name="Theologis A."/>
            <person name="Ecker J.R."/>
            <person name="Palm C.J."/>
            <person name="Federspiel N.A."/>
            <person name="Kaul S."/>
            <person name="White O."/>
            <person name="Alonso J."/>
            <person name="Altafi H."/>
            <person name="Araujo R."/>
            <person name="Bowman C.L."/>
            <person name="Brooks S.Y."/>
            <person name="Buehler E."/>
            <person name="Chan A."/>
            <person name="Chao Q."/>
            <person name="Chen H."/>
            <person name="Cheuk R.F."/>
            <person name="Chin C.W."/>
            <person name="Chung M.K."/>
            <person name="Conn L."/>
            <person name="Conway A.B."/>
            <person name="Conway A.R."/>
            <person name="Creasy T.H."/>
            <person name="Dewar K."/>
            <person name="Dunn P."/>
            <person name="Etgu P."/>
            <person name="Feldblyum T.V."/>
            <person name="Feng J.-D."/>
            <person name="Fong B."/>
            <person name="Fujii C.Y."/>
            <person name="Gill J.E."/>
            <person name="Goldsmith A.D."/>
            <person name="Haas B."/>
            <person name="Hansen N.F."/>
            <person name="Hughes B."/>
            <person name="Huizar L."/>
            <person name="Hunter J.L."/>
            <person name="Jenkins J."/>
            <person name="Johnson-Hopson C."/>
            <person name="Khan S."/>
            <person name="Khaykin E."/>
            <person name="Kim C.J."/>
            <person name="Koo H.L."/>
            <person name="Kremenetskaia I."/>
            <person name="Kurtz D.B."/>
            <person name="Kwan A."/>
            <person name="Lam B."/>
            <person name="Langin-Hooper S."/>
            <person name="Lee A."/>
            <person name="Lee J.M."/>
            <person name="Lenz C.A."/>
            <person name="Li J.H."/>
            <person name="Li Y.-P."/>
            <person name="Lin X."/>
            <person name="Liu S.X."/>
            <person name="Liu Z.A."/>
            <person name="Luros J.S."/>
            <person name="Maiti R."/>
            <person name="Marziali A."/>
            <person name="Militscher J."/>
            <person name="Miranda M."/>
            <person name="Nguyen M."/>
            <person name="Nierman W.C."/>
            <person name="Osborne B.I."/>
            <person name="Pai G."/>
            <person name="Peterson J."/>
            <person name="Pham P.K."/>
            <person name="Rizzo M."/>
            <person name="Rooney T."/>
            <person name="Rowley D."/>
            <person name="Sakano H."/>
            <person name="Salzberg S.L."/>
            <person name="Schwartz J.R."/>
            <person name="Shinn P."/>
            <person name="Southwick A.M."/>
            <person name="Sun H."/>
            <person name="Tallon L.J."/>
            <person name="Tambunga G."/>
            <person name="Toriumi M.J."/>
            <person name="Town C.D."/>
            <person name="Utterback T."/>
            <person name="Van Aken S."/>
            <person name="Vaysberg M."/>
            <person name="Vysotskaia V.S."/>
            <person name="Walker M."/>
            <person name="Wu D."/>
            <person name="Yu G."/>
            <person name="Fraser C.M."/>
            <person name="Venter J.C."/>
            <person name="Davis R.W."/>
        </authorList>
    </citation>
    <scope>NUCLEOTIDE SEQUENCE [LARGE SCALE GENOMIC DNA]</scope>
    <source>
        <strain>cv. Columbia</strain>
    </source>
</reference>
<reference key="2">
    <citation type="journal article" date="2017" name="Plant J.">
        <title>Araport11: a complete reannotation of the Arabidopsis thaliana reference genome.</title>
        <authorList>
            <person name="Cheng C.Y."/>
            <person name="Krishnakumar V."/>
            <person name="Chan A.P."/>
            <person name="Thibaud-Nissen F."/>
            <person name="Schobel S."/>
            <person name="Town C.D."/>
        </authorList>
    </citation>
    <scope>GENOME REANNOTATION</scope>
    <source>
        <strain>cv. Columbia</strain>
    </source>
</reference>
<reference key="3">
    <citation type="submission" date="2004-09" db="EMBL/GenBank/DDBJ databases">
        <title>Large-scale analysis of RIKEN Arabidopsis full-length (RAFL) cDNAs.</title>
        <authorList>
            <person name="Totoki Y."/>
            <person name="Seki M."/>
            <person name="Ishida J."/>
            <person name="Nakajima M."/>
            <person name="Enju A."/>
            <person name="Kamiya A."/>
            <person name="Narusaka M."/>
            <person name="Shin-i T."/>
            <person name="Nakagawa M."/>
            <person name="Sakamoto N."/>
            <person name="Oishi K."/>
            <person name="Kohara Y."/>
            <person name="Kobayashi M."/>
            <person name="Toyoda A."/>
            <person name="Sakaki Y."/>
            <person name="Sakurai T."/>
            <person name="Iida K."/>
            <person name="Akiyama K."/>
            <person name="Satou M."/>
            <person name="Toyoda T."/>
            <person name="Konagaya A."/>
            <person name="Carninci P."/>
            <person name="Kawai J."/>
            <person name="Hayashizaki Y."/>
            <person name="Shinozaki K."/>
        </authorList>
    </citation>
    <scope>NUCLEOTIDE SEQUENCE [LARGE SCALE MRNA]</scope>
    <source>
        <strain>cv. Columbia</strain>
    </source>
</reference>
<proteinExistence type="evidence at transcript level"/>
<protein>
    <recommendedName>
        <fullName>Protein TRM32</fullName>
    </recommendedName>
    <alternativeName>
        <fullName>TON1-RECRUITING MOTIF protein 32</fullName>
    </alternativeName>
</protein>
<sequence length="552" mass="63905">MGKHLKNESSSPNHGKYNHKLGWLAGMLHVLDFHHWRTKNRPICWKTPRTHSLMRETEEQEPFLDSKINDSKMLSVVADNKPTRPETKLKKTMTTKQVTEYVDFLEILRKEDVFVKIMKDQVQIKSNPRVLPKSGSFPISGSSRPARIQHKQKENWYAPKQNGAVLTLKVPRDTSQECKPISPSHGSADDDHGFNHAIINGFREIKKLLKNTLKDRNRTKKKKKKKVLDVAKDDYVGRYSQLLKQISRREGGDLRSKSLKLSYEEKKSDSRDNKPQFFRRISSLSSLEVLGSFLTDLPRDSSTSNQETRISEDQDTNFGAKKSVLSSESPVRAEKEEKYEVQEERSQENHLDSSNQRILQQEPDSVPSTNKTAEKTETLLPQGLGLSSLEIYKHEEEDEDAYFCYVKKVLKVSGFLENKDNEEKWYSEEQPLNPSLLYELDIQEEETVNDKELLFDLVNEAIVETQNHSQIYFPKTFPYGKRYLDEVWGRVEWSLSGLGAENRDRSLDDIVGRDLLTKSDGWMNLQGESEWLTLELEDLIFDDVLDELLCVY</sequence>
<gene>
    <name type="primary">TRM32</name>
    <name type="ordered locus">At1g07620</name>
    <name type="ORF">F24B9.32</name>
</gene>
<feature type="chain" id="PRO_0000424834" description="Protein TRM32">
    <location>
        <begin position="1"/>
        <end position="552"/>
    </location>
</feature>
<feature type="region of interest" description="Disordered" evidence="1">
    <location>
        <begin position="295"/>
        <end position="379"/>
    </location>
</feature>
<feature type="compositionally biased region" description="Basic and acidic residues" evidence="1">
    <location>
        <begin position="331"/>
        <end position="351"/>
    </location>
</feature>
<feature type="compositionally biased region" description="Polar residues" evidence="1">
    <location>
        <begin position="352"/>
        <end position="371"/>
    </location>
</feature>
<feature type="sequence conflict" description="In Ref. 3; BAD42902." evidence="2" ref="3">
    <original>K</original>
    <variation>R</variation>
    <location>
        <position position="214"/>
    </location>
</feature>
<accession>F4HSD5</accession>
<accession>Q683H8</accession>
<accession>Q9LQN5</accession>
<evidence type="ECO:0000256" key="1">
    <source>
        <dbReference type="SAM" id="MobiDB-lite"/>
    </source>
</evidence>
<evidence type="ECO:0000305" key="2"/>
<name>TRM32_ARATH</name>
<organism>
    <name type="scientific">Arabidopsis thaliana</name>
    <name type="common">Mouse-ear cress</name>
    <dbReference type="NCBI Taxonomy" id="3702"/>
    <lineage>
        <taxon>Eukaryota</taxon>
        <taxon>Viridiplantae</taxon>
        <taxon>Streptophyta</taxon>
        <taxon>Embryophyta</taxon>
        <taxon>Tracheophyta</taxon>
        <taxon>Spermatophyta</taxon>
        <taxon>Magnoliopsida</taxon>
        <taxon>eudicotyledons</taxon>
        <taxon>Gunneridae</taxon>
        <taxon>Pentapetalae</taxon>
        <taxon>rosids</taxon>
        <taxon>malvids</taxon>
        <taxon>Brassicales</taxon>
        <taxon>Brassicaceae</taxon>
        <taxon>Camelineae</taxon>
        <taxon>Arabidopsis</taxon>
    </lineage>
</organism>
<keyword id="KW-1185">Reference proteome</keyword>
<dbReference type="EMBL" id="AC007583">
    <property type="protein sequence ID" value="AAF75096.1"/>
    <property type="status" value="ALT_SEQ"/>
    <property type="molecule type" value="Genomic_DNA"/>
</dbReference>
<dbReference type="EMBL" id="CP002684">
    <property type="protein sequence ID" value="AEE28150.1"/>
    <property type="molecule type" value="Genomic_DNA"/>
</dbReference>
<dbReference type="EMBL" id="CP002684">
    <property type="protein sequence ID" value="ANM60580.1"/>
    <property type="molecule type" value="Genomic_DNA"/>
</dbReference>
<dbReference type="EMBL" id="CP002684">
    <property type="protein sequence ID" value="ANM60581.1"/>
    <property type="molecule type" value="Genomic_DNA"/>
</dbReference>
<dbReference type="EMBL" id="AK175139">
    <property type="protein sequence ID" value="BAD42902.1"/>
    <property type="molecule type" value="mRNA"/>
</dbReference>
<dbReference type="PIR" id="F86210">
    <property type="entry name" value="F86210"/>
</dbReference>
<dbReference type="RefSeq" id="NP_001322857.1">
    <property type="nucleotide sequence ID" value="NM_001331713.1"/>
</dbReference>
<dbReference type="RefSeq" id="NP_001322858.1">
    <property type="nucleotide sequence ID" value="NM_001331712.1"/>
</dbReference>
<dbReference type="RefSeq" id="NP_172241.2">
    <property type="nucleotide sequence ID" value="NM_100635.3"/>
</dbReference>
<dbReference type="SMR" id="F4HSD5"/>
<dbReference type="FunCoup" id="F4HSD5">
    <property type="interactions" value="5"/>
</dbReference>
<dbReference type="STRING" id="3702.F4HSD5"/>
<dbReference type="iPTMnet" id="F4HSD5"/>
<dbReference type="PaxDb" id="3702-AT1G07620.1"/>
<dbReference type="ProteomicsDB" id="245241"/>
<dbReference type="EnsemblPlants" id="AT1G07620.1">
    <property type="protein sequence ID" value="AT1G07620.1"/>
    <property type="gene ID" value="AT1G07620"/>
</dbReference>
<dbReference type="EnsemblPlants" id="AT1G07620.3">
    <property type="protein sequence ID" value="AT1G07620.3"/>
    <property type="gene ID" value="AT1G07620"/>
</dbReference>
<dbReference type="EnsemblPlants" id="AT1G07620.4">
    <property type="protein sequence ID" value="AT1G07620.4"/>
    <property type="gene ID" value="AT1G07620"/>
</dbReference>
<dbReference type="GeneID" id="837275"/>
<dbReference type="Gramene" id="AT1G07620.1">
    <property type="protein sequence ID" value="AT1G07620.1"/>
    <property type="gene ID" value="AT1G07620"/>
</dbReference>
<dbReference type="Gramene" id="AT1G07620.3">
    <property type="protein sequence ID" value="AT1G07620.3"/>
    <property type="gene ID" value="AT1G07620"/>
</dbReference>
<dbReference type="Gramene" id="AT1G07620.4">
    <property type="protein sequence ID" value="AT1G07620.4"/>
    <property type="gene ID" value="AT1G07620"/>
</dbReference>
<dbReference type="KEGG" id="ath:AT1G07620"/>
<dbReference type="Araport" id="AT1G07620"/>
<dbReference type="TAIR" id="AT1G07620">
    <property type="gene designation" value="ATOBGM"/>
</dbReference>
<dbReference type="eggNOG" id="ENOG502RSQC">
    <property type="taxonomic scope" value="Eukaryota"/>
</dbReference>
<dbReference type="HOGENOM" id="CLU_493782_0_0_1"/>
<dbReference type="InParanoid" id="F4HSD5"/>
<dbReference type="PRO" id="PR:F4HSD5"/>
<dbReference type="Proteomes" id="UP000006548">
    <property type="component" value="Chromosome 1"/>
</dbReference>
<dbReference type="ExpressionAtlas" id="F4HSD5">
    <property type="expression patterns" value="baseline and differential"/>
</dbReference>
<dbReference type="InterPro" id="IPR025486">
    <property type="entry name" value="DUF4378"/>
</dbReference>
<dbReference type="InterPro" id="IPR044257">
    <property type="entry name" value="TRM32-like"/>
</dbReference>
<dbReference type="PANTHER" id="PTHR47071">
    <property type="entry name" value="PROTEIN TRM32"/>
    <property type="match status" value="1"/>
</dbReference>
<dbReference type="PANTHER" id="PTHR47071:SF2">
    <property type="entry name" value="PROTEIN TRM32"/>
    <property type="match status" value="1"/>
</dbReference>
<dbReference type="Pfam" id="PF14309">
    <property type="entry name" value="DUF4378"/>
    <property type="match status" value="1"/>
</dbReference>
<comment type="sequence caution" evidence="2">
    <conflict type="erroneous gene model prediction">
        <sequence resource="EMBL-CDS" id="AAF75096"/>
    </conflict>
    <text>The predicted gene At1g07620 has been split into 2 genes: At1g07615 and At1g07620.</text>
</comment>